<organism>
    <name type="scientific">Parasynechococcus marenigrum (strain WH8102)</name>
    <dbReference type="NCBI Taxonomy" id="84588"/>
    <lineage>
        <taxon>Bacteria</taxon>
        <taxon>Bacillati</taxon>
        <taxon>Cyanobacteriota</taxon>
        <taxon>Cyanophyceae</taxon>
        <taxon>Synechococcales</taxon>
        <taxon>Prochlorococcaceae</taxon>
        <taxon>Parasynechococcus</taxon>
        <taxon>Parasynechococcus marenigrum</taxon>
    </lineage>
</organism>
<reference key="1">
    <citation type="journal article" date="2003" name="Nature">
        <title>The genome of a motile marine Synechococcus.</title>
        <authorList>
            <person name="Palenik B."/>
            <person name="Brahamsha B."/>
            <person name="Larimer F.W."/>
            <person name="Land M.L."/>
            <person name="Hauser L."/>
            <person name="Chain P."/>
            <person name="Lamerdin J.E."/>
            <person name="Regala W."/>
            <person name="Allen E.E."/>
            <person name="McCarren J."/>
            <person name="Paulsen I.T."/>
            <person name="Dufresne A."/>
            <person name="Partensky F."/>
            <person name="Webb E.A."/>
            <person name="Waterbury J."/>
        </authorList>
    </citation>
    <scope>NUCLEOTIDE SEQUENCE [LARGE SCALE GENOMIC DNA]</scope>
    <source>
        <strain>WH8102</strain>
    </source>
</reference>
<proteinExistence type="inferred from homology"/>
<evidence type="ECO:0000255" key="1">
    <source>
        <dbReference type="HAMAP-Rule" id="MF_01107"/>
    </source>
</evidence>
<dbReference type="EC" id="2.6.1.11" evidence="1"/>
<dbReference type="EMBL" id="BX569693">
    <property type="protein sequence ID" value="CAE08149.1"/>
    <property type="molecule type" value="Genomic_DNA"/>
</dbReference>
<dbReference type="SMR" id="Q7U5R5"/>
<dbReference type="STRING" id="84588.SYNW1634"/>
<dbReference type="KEGG" id="syw:SYNW1634"/>
<dbReference type="eggNOG" id="COG4992">
    <property type="taxonomic scope" value="Bacteria"/>
</dbReference>
<dbReference type="HOGENOM" id="CLU_016922_10_1_3"/>
<dbReference type="UniPathway" id="UPA00068">
    <property type="reaction ID" value="UER00109"/>
</dbReference>
<dbReference type="Proteomes" id="UP000001422">
    <property type="component" value="Chromosome"/>
</dbReference>
<dbReference type="GO" id="GO:0005737">
    <property type="term" value="C:cytoplasm"/>
    <property type="evidence" value="ECO:0007669"/>
    <property type="project" value="UniProtKB-SubCell"/>
</dbReference>
<dbReference type="GO" id="GO:0042802">
    <property type="term" value="F:identical protein binding"/>
    <property type="evidence" value="ECO:0007669"/>
    <property type="project" value="TreeGrafter"/>
</dbReference>
<dbReference type="GO" id="GO:0003992">
    <property type="term" value="F:N2-acetyl-L-ornithine:2-oxoglutarate 5-aminotransferase activity"/>
    <property type="evidence" value="ECO:0007669"/>
    <property type="project" value="UniProtKB-UniRule"/>
</dbReference>
<dbReference type="GO" id="GO:0030170">
    <property type="term" value="F:pyridoxal phosphate binding"/>
    <property type="evidence" value="ECO:0007669"/>
    <property type="project" value="InterPro"/>
</dbReference>
<dbReference type="GO" id="GO:0006526">
    <property type="term" value="P:L-arginine biosynthetic process"/>
    <property type="evidence" value="ECO:0007669"/>
    <property type="project" value="UniProtKB-UniRule"/>
</dbReference>
<dbReference type="CDD" id="cd00610">
    <property type="entry name" value="OAT_like"/>
    <property type="match status" value="1"/>
</dbReference>
<dbReference type="FunFam" id="3.40.640.10:FF:000004">
    <property type="entry name" value="Acetylornithine aminotransferase"/>
    <property type="match status" value="1"/>
</dbReference>
<dbReference type="Gene3D" id="3.90.1150.10">
    <property type="entry name" value="Aspartate Aminotransferase, domain 1"/>
    <property type="match status" value="1"/>
</dbReference>
<dbReference type="Gene3D" id="3.40.640.10">
    <property type="entry name" value="Type I PLP-dependent aspartate aminotransferase-like (Major domain)"/>
    <property type="match status" value="1"/>
</dbReference>
<dbReference type="HAMAP" id="MF_01107">
    <property type="entry name" value="ArgD_aminotrans_3"/>
    <property type="match status" value="1"/>
</dbReference>
<dbReference type="InterPro" id="IPR004636">
    <property type="entry name" value="AcOrn/SuccOrn_fam"/>
</dbReference>
<dbReference type="InterPro" id="IPR005814">
    <property type="entry name" value="Aminotrans_3"/>
</dbReference>
<dbReference type="InterPro" id="IPR049704">
    <property type="entry name" value="Aminotrans_3_PPA_site"/>
</dbReference>
<dbReference type="InterPro" id="IPR050103">
    <property type="entry name" value="Class-III_PLP-dep_AT"/>
</dbReference>
<dbReference type="InterPro" id="IPR015424">
    <property type="entry name" value="PyrdxlP-dep_Trfase"/>
</dbReference>
<dbReference type="InterPro" id="IPR015421">
    <property type="entry name" value="PyrdxlP-dep_Trfase_major"/>
</dbReference>
<dbReference type="InterPro" id="IPR015422">
    <property type="entry name" value="PyrdxlP-dep_Trfase_small"/>
</dbReference>
<dbReference type="NCBIfam" id="TIGR00707">
    <property type="entry name" value="argD"/>
    <property type="match status" value="1"/>
</dbReference>
<dbReference type="NCBIfam" id="NF002325">
    <property type="entry name" value="PRK01278.1"/>
    <property type="match status" value="1"/>
</dbReference>
<dbReference type="PANTHER" id="PTHR11986:SF79">
    <property type="entry name" value="ACETYLORNITHINE AMINOTRANSFERASE, MITOCHONDRIAL"/>
    <property type="match status" value="1"/>
</dbReference>
<dbReference type="PANTHER" id="PTHR11986">
    <property type="entry name" value="AMINOTRANSFERASE CLASS III"/>
    <property type="match status" value="1"/>
</dbReference>
<dbReference type="Pfam" id="PF00202">
    <property type="entry name" value="Aminotran_3"/>
    <property type="match status" value="1"/>
</dbReference>
<dbReference type="PIRSF" id="PIRSF000521">
    <property type="entry name" value="Transaminase_4ab_Lys_Orn"/>
    <property type="match status" value="1"/>
</dbReference>
<dbReference type="SUPFAM" id="SSF53383">
    <property type="entry name" value="PLP-dependent transferases"/>
    <property type="match status" value="1"/>
</dbReference>
<dbReference type="PROSITE" id="PS00600">
    <property type="entry name" value="AA_TRANSFER_CLASS_3"/>
    <property type="match status" value="1"/>
</dbReference>
<name>ARGD_PARMW</name>
<protein>
    <recommendedName>
        <fullName evidence="1">Acetylornithine aminotransferase</fullName>
        <shortName evidence="1">ACOAT</shortName>
        <ecNumber evidence="1">2.6.1.11</ecNumber>
    </recommendedName>
</protein>
<accession>Q7U5R5</accession>
<sequence length="420" mass="45781">MVDAADSKSAGHWSWGFKSPGSHPEAVMNTYNRFPLTLVRGRGCWVWDDQGRRHLDAVAGIATDTLGHSDRALRRSLGRQLRRLQHVSNLYRIPEQDALATWLVQHSCADSVFFCNSGAEANEAAIKLARKHGHLKRGIDRPRILTASASFHGRTLAAVSATGQPRYHQGFEPMVEGFDYFPYNDIHAFESLLERHEANGPAVAAVLLEPLQGEGGVHPGDAGFFQRLRHLCSERNILLILDEVQVGMGRSGRLWGYEQLGIEPDAFTLAKGLGGGHAIGALLVNAKADVFEPGDHASTFGGNPFACTAGLTVAQEIQRRGLLRNVEERGQQLQQGIQGLVARYPQLLQGVRGWGLLQGLVLHQDCGVTAPQLAKAAIEQRLLLVAAGATVLRMVPPLVISANEVRQLLRRLDATLAELV</sequence>
<keyword id="KW-0028">Amino-acid biosynthesis</keyword>
<keyword id="KW-0032">Aminotransferase</keyword>
<keyword id="KW-0055">Arginine biosynthesis</keyword>
<keyword id="KW-0963">Cytoplasm</keyword>
<keyword id="KW-0663">Pyridoxal phosphate</keyword>
<keyword id="KW-0808">Transferase</keyword>
<gene>
    <name evidence="1" type="primary">argD</name>
    <name type="ordered locus">SYNW1634</name>
</gene>
<comment type="catalytic activity">
    <reaction evidence="1">
        <text>N(2)-acetyl-L-ornithine + 2-oxoglutarate = N-acetyl-L-glutamate 5-semialdehyde + L-glutamate</text>
        <dbReference type="Rhea" id="RHEA:18049"/>
        <dbReference type="ChEBI" id="CHEBI:16810"/>
        <dbReference type="ChEBI" id="CHEBI:29123"/>
        <dbReference type="ChEBI" id="CHEBI:29985"/>
        <dbReference type="ChEBI" id="CHEBI:57805"/>
        <dbReference type="EC" id="2.6.1.11"/>
    </reaction>
</comment>
<comment type="cofactor">
    <cofactor evidence="1">
        <name>pyridoxal 5'-phosphate</name>
        <dbReference type="ChEBI" id="CHEBI:597326"/>
    </cofactor>
    <text evidence="1">Binds 1 pyridoxal phosphate per subunit.</text>
</comment>
<comment type="pathway">
    <text evidence="1">Amino-acid biosynthesis; L-arginine biosynthesis; N(2)-acetyl-L-ornithine from L-glutamate: step 4/4.</text>
</comment>
<comment type="subunit">
    <text evidence="1">Homodimer.</text>
</comment>
<comment type="subcellular location">
    <subcellularLocation>
        <location evidence="1">Cytoplasm</location>
    </subcellularLocation>
</comment>
<comment type="miscellaneous">
    <text evidence="1">May also have succinyldiaminopimelate aminotransferase activity, thus carrying out the corresponding step in lysine biosynthesis.</text>
</comment>
<comment type="similarity">
    <text evidence="1">Belongs to the class-III pyridoxal-phosphate-dependent aminotransferase family. ArgD subfamily.</text>
</comment>
<feature type="chain" id="PRO_0000112803" description="Acetylornithine aminotransferase">
    <location>
        <begin position="1"/>
        <end position="420"/>
    </location>
</feature>
<feature type="binding site" evidence="1">
    <location>
        <begin position="118"/>
        <end position="119"/>
    </location>
    <ligand>
        <name>pyridoxal 5'-phosphate</name>
        <dbReference type="ChEBI" id="CHEBI:597326"/>
    </ligand>
</feature>
<feature type="binding site" evidence="1">
    <location>
        <position position="151"/>
    </location>
    <ligand>
        <name>pyridoxal 5'-phosphate</name>
        <dbReference type="ChEBI" id="CHEBI:597326"/>
    </ligand>
</feature>
<feature type="binding site" evidence="1">
    <location>
        <position position="154"/>
    </location>
    <ligand>
        <name>N(2)-acetyl-L-ornithine</name>
        <dbReference type="ChEBI" id="CHEBI:57805"/>
    </ligand>
</feature>
<feature type="binding site" evidence="1">
    <location>
        <begin position="242"/>
        <end position="245"/>
    </location>
    <ligand>
        <name>pyridoxal 5'-phosphate</name>
        <dbReference type="ChEBI" id="CHEBI:597326"/>
    </ligand>
</feature>
<feature type="binding site" evidence="1">
    <location>
        <position position="298"/>
    </location>
    <ligand>
        <name>N(2)-acetyl-L-ornithine</name>
        <dbReference type="ChEBI" id="CHEBI:57805"/>
    </ligand>
</feature>
<feature type="binding site" evidence="1">
    <location>
        <position position="299"/>
    </location>
    <ligand>
        <name>pyridoxal 5'-phosphate</name>
        <dbReference type="ChEBI" id="CHEBI:597326"/>
    </ligand>
</feature>
<feature type="modified residue" description="N6-(pyridoxal phosphate)lysine" evidence="1">
    <location>
        <position position="271"/>
    </location>
</feature>